<feature type="chain" id="PRO_0000383237" description="Nucleotide-binding protein Ddes_0972">
    <location>
        <begin position="1"/>
        <end position="310"/>
    </location>
</feature>
<feature type="binding site" evidence="1">
    <location>
        <begin position="30"/>
        <end position="37"/>
    </location>
    <ligand>
        <name>ATP</name>
        <dbReference type="ChEBI" id="CHEBI:30616"/>
    </ligand>
</feature>
<feature type="binding site" evidence="1">
    <location>
        <begin position="82"/>
        <end position="85"/>
    </location>
    <ligand>
        <name>GTP</name>
        <dbReference type="ChEBI" id="CHEBI:37565"/>
    </ligand>
</feature>
<proteinExistence type="inferred from homology"/>
<reference key="1">
    <citation type="submission" date="2009-01" db="EMBL/GenBank/DDBJ databases">
        <title>Complete sequence of Desulfovibrio desulfuricans subsp. desulfuricans str. ATCC 27774.</title>
        <authorList>
            <consortium name="US DOE Joint Genome Institute"/>
            <person name="Lucas S."/>
            <person name="Copeland A."/>
            <person name="Lapidus A."/>
            <person name="Glavina del Rio T."/>
            <person name="Tice H."/>
            <person name="Bruce D."/>
            <person name="Goodwin L."/>
            <person name="Pitluck S."/>
            <person name="Sims D."/>
            <person name="Lu M."/>
            <person name="Kiss H."/>
            <person name="Meineke L."/>
            <person name="Brettin T."/>
            <person name="Detter J.C."/>
            <person name="Han C."/>
            <person name="Larimer F."/>
            <person name="Land M."/>
            <person name="Hauser L."/>
            <person name="Kyrpides N."/>
            <person name="Ovchinnikova G."/>
            <person name="Hazen T.C."/>
        </authorList>
    </citation>
    <scope>NUCLEOTIDE SEQUENCE [LARGE SCALE GENOMIC DNA]</scope>
    <source>
        <strain>ATCC 27774 / DSM 6949 / MB</strain>
    </source>
</reference>
<gene>
    <name type="ordered locus">Ddes_0972</name>
</gene>
<dbReference type="EMBL" id="CP001358">
    <property type="protein sequence ID" value="ACL48879.1"/>
    <property type="molecule type" value="Genomic_DNA"/>
</dbReference>
<dbReference type="SMR" id="B8IZF2"/>
<dbReference type="STRING" id="525146.Ddes_0972"/>
<dbReference type="KEGG" id="dds:Ddes_0972"/>
<dbReference type="eggNOG" id="COG1660">
    <property type="taxonomic scope" value="Bacteria"/>
</dbReference>
<dbReference type="HOGENOM" id="CLU_059558_0_0_7"/>
<dbReference type="GO" id="GO:0005524">
    <property type="term" value="F:ATP binding"/>
    <property type="evidence" value="ECO:0007669"/>
    <property type="project" value="UniProtKB-UniRule"/>
</dbReference>
<dbReference type="GO" id="GO:0005525">
    <property type="term" value="F:GTP binding"/>
    <property type="evidence" value="ECO:0007669"/>
    <property type="project" value="UniProtKB-UniRule"/>
</dbReference>
<dbReference type="HAMAP" id="MF_00636">
    <property type="entry name" value="RapZ_like"/>
    <property type="match status" value="1"/>
</dbReference>
<dbReference type="InterPro" id="IPR027417">
    <property type="entry name" value="P-loop_NTPase"/>
</dbReference>
<dbReference type="InterPro" id="IPR005337">
    <property type="entry name" value="RapZ-like"/>
</dbReference>
<dbReference type="InterPro" id="IPR053930">
    <property type="entry name" value="RapZ-like_N"/>
</dbReference>
<dbReference type="InterPro" id="IPR053931">
    <property type="entry name" value="RapZ_C"/>
</dbReference>
<dbReference type="NCBIfam" id="NF003828">
    <property type="entry name" value="PRK05416.1"/>
    <property type="match status" value="1"/>
</dbReference>
<dbReference type="PANTHER" id="PTHR30448">
    <property type="entry name" value="RNASE ADAPTER PROTEIN RAPZ"/>
    <property type="match status" value="1"/>
</dbReference>
<dbReference type="PANTHER" id="PTHR30448:SF0">
    <property type="entry name" value="RNASE ADAPTER PROTEIN RAPZ"/>
    <property type="match status" value="1"/>
</dbReference>
<dbReference type="Pfam" id="PF22740">
    <property type="entry name" value="PapZ_C"/>
    <property type="match status" value="1"/>
</dbReference>
<dbReference type="Pfam" id="PF03668">
    <property type="entry name" value="RapZ-like_N"/>
    <property type="match status" value="1"/>
</dbReference>
<dbReference type="PIRSF" id="PIRSF005052">
    <property type="entry name" value="P-loopkin"/>
    <property type="match status" value="1"/>
</dbReference>
<dbReference type="SUPFAM" id="SSF52540">
    <property type="entry name" value="P-loop containing nucleoside triphosphate hydrolases"/>
    <property type="match status" value="1"/>
</dbReference>
<protein>
    <recommendedName>
        <fullName evidence="1">Nucleotide-binding protein Ddes_0972</fullName>
    </recommendedName>
</protein>
<sequence length="310" mass="34761">MSTATHPRPEGPVVETAAPMPPVAVCIVTGLSGAGKSTALKVFEDMGHFVVDGLPASLAPEMVDMMSRPSMSHFKGIALGMDLRQSNFLDEINEALSDLAAVNIRPMLLFMECDAQELIRRYATTRRPHPLEREGMGLEASLLSERNSLSPLREMADLVIDTSRFSIHDLRRAIQKRWSDSKSKLRAIRVNVISFGFKYGVPREADFVFDLRFLTNPYFVADLRPMCGKDKEVAQYVFEQPHAREFCVKLIDLLLFILPLMETEGRYRVTIAVGCTGGRHRSVAMAEEVTQALRQADYPVTLEHRHLELG</sequence>
<name>Y972_DESDA</name>
<comment type="function">
    <text evidence="1">Displays ATPase and GTPase activities.</text>
</comment>
<comment type="similarity">
    <text evidence="1">Belongs to the RapZ-like family.</text>
</comment>
<keyword id="KW-0067">ATP-binding</keyword>
<keyword id="KW-0342">GTP-binding</keyword>
<keyword id="KW-0547">Nucleotide-binding</keyword>
<organism>
    <name type="scientific">Desulfovibrio desulfuricans (strain ATCC 27774 / DSM 6949 / MB)</name>
    <dbReference type="NCBI Taxonomy" id="525146"/>
    <lineage>
        <taxon>Bacteria</taxon>
        <taxon>Pseudomonadati</taxon>
        <taxon>Thermodesulfobacteriota</taxon>
        <taxon>Desulfovibrionia</taxon>
        <taxon>Desulfovibrionales</taxon>
        <taxon>Desulfovibrionaceae</taxon>
        <taxon>Desulfovibrio</taxon>
    </lineage>
</organism>
<accession>B8IZF2</accession>
<evidence type="ECO:0000255" key="1">
    <source>
        <dbReference type="HAMAP-Rule" id="MF_00636"/>
    </source>
</evidence>